<proteinExistence type="evidence at protein level"/>
<comment type="function">
    <text evidence="4">Catalyzes the reversible interconversion of alpha-methyl-L-serine to L-alanine and formaldehyde.</text>
</comment>
<comment type="catalytic activity">
    <reaction evidence="4">
        <text>2-methyl-L-serine = formaldehyde + L-alanine</text>
        <dbReference type="Rhea" id="RHEA:64164"/>
        <dbReference type="ChEBI" id="CHEBI:16842"/>
        <dbReference type="ChEBI" id="CHEBI:57972"/>
        <dbReference type="ChEBI" id="CHEBI:149759"/>
    </reaction>
</comment>
<comment type="cofactor">
    <cofactor evidence="2">
        <name>pyridoxal 5'-phosphate</name>
        <dbReference type="ChEBI" id="CHEBI:597326"/>
    </cofactor>
</comment>
<comment type="subunit">
    <text evidence="1">Homodimer.</text>
</comment>
<comment type="similarity">
    <text evidence="6">Belongs to the SHMT family. Alpha-methylserine aldolase subfamily.</text>
</comment>
<reference evidence="7" key="1">
    <citation type="journal article" date="2008" name="Biosci. Biotechnol. Biochem.">
        <title>Gene cloning of alpha-methylserine aldolase from Variovorax paradoxus and purification and characterization of the recombinant enzyme.</title>
        <authorList>
            <person name="Nozaki H."/>
            <person name="Kuroda S."/>
            <person name="Watanabe K."/>
            <person name="Yokozeki K."/>
        </authorList>
    </citation>
    <scope>NUCLEOTIDE SEQUENCE [GENOMIC DNA]</scope>
    <scope>FUNCTION</scope>
    <scope>CATALYTIC ACTIVITY</scope>
    <source>
        <strain>AJ110406</strain>
    </source>
</reference>
<evidence type="ECO:0000250" key="1">
    <source>
        <dbReference type="UniProtKB" id="B2DEV5"/>
    </source>
</evidence>
<evidence type="ECO:0000250" key="2">
    <source>
        <dbReference type="UniProtKB" id="B2DEW1"/>
    </source>
</evidence>
<evidence type="ECO:0000250" key="3">
    <source>
        <dbReference type="UniProtKB" id="P0A825"/>
    </source>
</evidence>
<evidence type="ECO:0000269" key="4">
    <source>
    </source>
</evidence>
<evidence type="ECO:0000303" key="5">
    <source>
    </source>
</evidence>
<evidence type="ECO:0000305" key="6"/>
<evidence type="ECO:0000312" key="7">
    <source>
        <dbReference type="EMBL" id="BAG31012.1"/>
    </source>
</evidence>
<dbReference type="EC" id="4.1.2.-" evidence="4"/>
<dbReference type="EMBL" id="AB426473">
    <property type="protein sequence ID" value="BAG31012.1"/>
    <property type="molecule type" value="Genomic_DNA"/>
</dbReference>
<dbReference type="SMR" id="B2DEV9"/>
<dbReference type="GO" id="GO:0005737">
    <property type="term" value="C:cytoplasm"/>
    <property type="evidence" value="ECO:0007669"/>
    <property type="project" value="TreeGrafter"/>
</dbReference>
<dbReference type="GO" id="GO:0004372">
    <property type="term" value="F:glycine hydroxymethyltransferase activity"/>
    <property type="evidence" value="ECO:0007669"/>
    <property type="project" value="InterPro"/>
</dbReference>
<dbReference type="GO" id="GO:0016829">
    <property type="term" value="F:lyase activity"/>
    <property type="evidence" value="ECO:0007669"/>
    <property type="project" value="UniProtKB-KW"/>
</dbReference>
<dbReference type="GO" id="GO:0030170">
    <property type="term" value="F:pyridoxal phosphate binding"/>
    <property type="evidence" value="ECO:0007669"/>
    <property type="project" value="InterPro"/>
</dbReference>
<dbReference type="GO" id="GO:0019264">
    <property type="term" value="P:glycine biosynthetic process from serine"/>
    <property type="evidence" value="ECO:0007669"/>
    <property type="project" value="InterPro"/>
</dbReference>
<dbReference type="GO" id="GO:0035999">
    <property type="term" value="P:tetrahydrofolate interconversion"/>
    <property type="evidence" value="ECO:0007669"/>
    <property type="project" value="InterPro"/>
</dbReference>
<dbReference type="Gene3D" id="3.90.1150.10">
    <property type="entry name" value="Aspartate Aminotransferase, domain 1"/>
    <property type="match status" value="1"/>
</dbReference>
<dbReference type="Gene3D" id="3.40.640.10">
    <property type="entry name" value="Type I PLP-dependent aspartate aminotransferase-like (Major domain)"/>
    <property type="match status" value="1"/>
</dbReference>
<dbReference type="InterPro" id="IPR015424">
    <property type="entry name" value="PyrdxlP-dep_Trfase"/>
</dbReference>
<dbReference type="InterPro" id="IPR015421">
    <property type="entry name" value="PyrdxlP-dep_Trfase_major"/>
</dbReference>
<dbReference type="InterPro" id="IPR015422">
    <property type="entry name" value="PyrdxlP-dep_Trfase_small"/>
</dbReference>
<dbReference type="InterPro" id="IPR001085">
    <property type="entry name" value="Ser_HO-MeTrfase"/>
</dbReference>
<dbReference type="InterPro" id="IPR049943">
    <property type="entry name" value="Ser_HO-MeTrfase-like"/>
</dbReference>
<dbReference type="InterPro" id="IPR039429">
    <property type="entry name" value="SHMT-like_dom"/>
</dbReference>
<dbReference type="PANTHER" id="PTHR11680">
    <property type="entry name" value="SERINE HYDROXYMETHYLTRANSFERASE"/>
    <property type="match status" value="1"/>
</dbReference>
<dbReference type="PANTHER" id="PTHR11680:SF35">
    <property type="entry name" value="SERINE HYDROXYMETHYLTRANSFERASE 1"/>
    <property type="match status" value="1"/>
</dbReference>
<dbReference type="Pfam" id="PF00464">
    <property type="entry name" value="SHMT"/>
    <property type="match status" value="1"/>
</dbReference>
<dbReference type="PIRSF" id="PIRSF000412">
    <property type="entry name" value="SHMT"/>
    <property type="match status" value="1"/>
</dbReference>
<dbReference type="SUPFAM" id="SSF53383">
    <property type="entry name" value="PLP-dependent transferases"/>
    <property type="match status" value="1"/>
</dbReference>
<gene>
    <name evidence="7" type="primary">msald</name>
</gene>
<feature type="chain" id="PRO_0000461467" description="Alpha-methylserine aldolase">
    <location>
        <begin position="1"/>
        <end position="441"/>
    </location>
</feature>
<feature type="modified residue" description="N6-(pyridoxal phosphate)lysine" evidence="3">
    <location>
        <position position="256"/>
    </location>
</feature>
<organism>
    <name type="scientific">Variovorax paradoxus</name>
    <dbReference type="NCBI Taxonomy" id="34073"/>
    <lineage>
        <taxon>Bacteria</taxon>
        <taxon>Pseudomonadati</taxon>
        <taxon>Pseudomonadota</taxon>
        <taxon>Betaproteobacteria</taxon>
        <taxon>Burkholderiales</taxon>
        <taxon>Comamonadaceae</taxon>
        <taxon>Variovorax</taxon>
    </lineage>
</organism>
<keyword id="KW-0456">Lyase</keyword>
<keyword id="KW-0663">Pyridoxal phosphate</keyword>
<accession>B2DEV9</accession>
<protein>
    <recommendedName>
        <fullName evidence="5">Alpha-methylserine aldolase</fullName>
        <ecNumber evidence="4">4.1.2.-</ecNumber>
    </recommendedName>
</protein>
<sequence>MPAAALQRRPWVPAASEDHVLSIAADAAARDAASVAVEIERLVAENHRIHDVDGLNLNPATNVMNPAAEALLSRGLGSRPSLGYPGDKYEMGLEAIERIEVVAAELAAEVFGAKFAEVRVSSGALSNLYVFMATCRPGDTIIVPPPSIGGHVTHHAAGAAGLYGLKPVSAPVDADGYTVDVAALAKLAGEVKPKLITIGGSLNLFPHPVPAIREIADGVGAKLLFDAAHLSGMVAGKAWPQPLEQGAHAITMSTYKSLGGPAGGLIVSNDAALMERIDAIAYPGLTANSDAGRTAALARSLLDWKVHGVAYAAAMRETAQALARALDARGLPVFVKARGFTQSHQLAVEAARWGGGQHAAKKIAQGGLLACGIGLPIAPVEGDINGLRLGVPEIVRLGFTPDDMPQLADWIARALEGDAASVAAEVRERRTHLGELRYIVR</sequence>
<name>MSAL3_VARPD</name>